<sequence>MEAHVERALREGLTEEERAALEPAVMAHHTFPPSTTTATTAAATCTSLVTQRVAAPVRAVWPIVRSFGNPQRYKHFVRTCALAAGDGASVGSVREVTVVSGLPASTSTERLEMLDDDRHIISFRVVGGQHRLRNYRSVTSVTEFQPPAAGPGPAPPYCVVVESYVVDVPDGNTAEDTRMFTDTVVKLNLQMLAAVAEDSSSASRRRD</sequence>
<protein>
    <recommendedName>
        <fullName evidence="9">Abscisic acid receptor PYL9</fullName>
    </recommendedName>
    <alternativeName>
        <fullName evidence="7">PYR1-like protein 2</fullName>
        <shortName evidence="7">OsPYL2</shortName>
    </alternativeName>
    <alternativeName>
        <fullName evidence="8">PYR1-like protein 9</fullName>
        <shortName evidence="8">OsPYL9</shortName>
    </alternativeName>
    <alternativeName>
        <fullName evidence="9">Regulatory components of ABA receptor 9</fullName>
    </alternativeName>
</protein>
<comment type="function">
    <text evidence="4 5">Involved in abscisic acid (ABA) signaling during seed germination and abiotic stress response. Acts as a positive regulator of ABA-mediated inhibition of seed germination, and tolerance to drought and cold stresses (PubMed:26362328). Inhibits the activity of the protein phosphatases PP2C06 and PP2C09 when activated by abscisic acid (ABA) (PubMed:24743650).</text>
</comment>
<comment type="subunit">
    <text evidence="4 5 6">Homodimer. Interacts with PP2C06 (PubMed:24743650). Interacts with PP2C50. Binding to PP2C50 is dependent on the presence of abscisic acid (ABA) (PubMed:28827170). Interacts with PP2C30 and PP2C53. Binding to PP2C30 and PP2C53 is dependent on the presence of ABA (PubMed:26362328).</text>
</comment>
<comment type="subcellular location">
    <subcellularLocation>
        <location evidence="5">Cytoplasm</location>
        <location evidence="5">Cytosol</location>
    </subcellularLocation>
    <subcellularLocation>
        <location evidence="5">Nucleus</location>
    </subcellularLocation>
</comment>
<comment type="induction">
    <text evidence="5">Repressed by abscisic acid (ABA).</text>
</comment>
<comment type="miscellaneous">
    <text evidence="5">Plants overexpressing PYL9 exhibit abscisic acid (ABA) hypersensitive phenotype during seed germination. Plants overexpressing PYL9 exhibit tolerance to cold and drought stresses.</text>
</comment>
<comment type="similarity">
    <text evidence="9">Belongs to the PYR/PYL/RCAR abscisic acid intracellular receptor family.</text>
</comment>
<proteinExistence type="evidence at protein level"/>
<gene>
    <name evidence="8" type="primary">PYL9</name>
    <name evidence="7" type="synonym">PYL2</name>
    <name evidence="8" type="synonym">RCAR9</name>
    <name evidence="12" type="ordered locus">Os06g0562200</name>
    <name evidence="9" type="ordered locus">LOC_Os06g36670</name>
    <name evidence="11" type="ORF">P0456F09.29</name>
    <name evidence="10" type="ORF">P0656E03.2</name>
</gene>
<name>PYL9_ORYSJ</name>
<accession>Q5Z8S0</accession>
<dbReference type="EMBL" id="AP003714">
    <property type="protein sequence ID" value="BAD53743.1"/>
    <property type="molecule type" value="Genomic_DNA"/>
</dbReference>
<dbReference type="EMBL" id="AP003762">
    <property type="protein sequence ID" value="BAD53834.1"/>
    <property type="molecule type" value="Genomic_DNA"/>
</dbReference>
<dbReference type="EMBL" id="AP008212">
    <property type="protein sequence ID" value="BAF19788.1"/>
    <property type="molecule type" value="Genomic_DNA"/>
</dbReference>
<dbReference type="EMBL" id="AP014962">
    <property type="protein sequence ID" value="BAS98256.1"/>
    <property type="molecule type" value="Genomic_DNA"/>
</dbReference>
<dbReference type="PDB" id="4OIC">
    <property type="method" value="X-ray"/>
    <property type="resolution" value="2.00 A"/>
    <property type="chains" value="A=1-207"/>
</dbReference>
<dbReference type="PDBsum" id="4OIC"/>
<dbReference type="SMR" id="Q5Z8S0"/>
<dbReference type="FunCoup" id="Q5Z8S0">
    <property type="interactions" value="144"/>
</dbReference>
<dbReference type="STRING" id="39947.Q5Z8S0"/>
<dbReference type="PaxDb" id="39947-Q5Z8S0"/>
<dbReference type="EnsemblPlants" id="Os06t0562200-01">
    <property type="protein sequence ID" value="Os06t0562200-01"/>
    <property type="gene ID" value="Os06g0562200"/>
</dbReference>
<dbReference type="GeneID" id="4341308"/>
<dbReference type="Gramene" id="Os06t0562200-01">
    <property type="protein sequence ID" value="Os06t0562200-01"/>
    <property type="gene ID" value="Os06g0562200"/>
</dbReference>
<dbReference type="KEGG" id="dosa:Os06g0562200"/>
<dbReference type="KEGG" id="osa:4341308"/>
<dbReference type="eggNOG" id="ENOG502QU62">
    <property type="taxonomic scope" value="Eukaryota"/>
</dbReference>
<dbReference type="HOGENOM" id="CLU_077517_0_1_1"/>
<dbReference type="InParanoid" id="Q5Z8S0"/>
<dbReference type="OMA" id="MASEAYP"/>
<dbReference type="OrthoDB" id="4436220at2759"/>
<dbReference type="PlantReactome" id="R-OSA-3899351">
    <property type="pathway name" value="Abscisic acid (ABA) mediated signaling"/>
</dbReference>
<dbReference type="EvolutionaryTrace" id="Q5Z8S0"/>
<dbReference type="Proteomes" id="UP000000763">
    <property type="component" value="Chromosome 6"/>
</dbReference>
<dbReference type="Proteomes" id="UP000059680">
    <property type="component" value="Chromosome 6"/>
</dbReference>
<dbReference type="GO" id="GO:0005737">
    <property type="term" value="C:cytoplasm"/>
    <property type="evidence" value="ECO:0000318"/>
    <property type="project" value="GO_Central"/>
</dbReference>
<dbReference type="GO" id="GO:0005829">
    <property type="term" value="C:cytosol"/>
    <property type="evidence" value="ECO:0000314"/>
    <property type="project" value="UniProtKB"/>
</dbReference>
<dbReference type="GO" id="GO:0005634">
    <property type="term" value="C:nucleus"/>
    <property type="evidence" value="ECO:0000314"/>
    <property type="project" value="UniProtKB"/>
</dbReference>
<dbReference type="GO" id="GO:0010427">
    <property type="term" value="F:abscisic acid binding"/>
    <property type="evidence" value="ECO:0000314"/>
    <property type="project" value="UniProtKB"/>
</dbReference>
<dbReference type="GO" id="GO:0042803">
    <property type="term" value="F:protein homodimerization activity"/>
    <property type="evidence" value="ECO:0000314"/>
    <property type="project" value="UniProtKB"/>
</dbReference>
<dbReference type="GO" id="GO:0004864">
    <property type="term" value="F:protein phosphatase inhibitor activity"/>
    <property type="evidence" value="ECO:0000318"/>
    <property type="project" value="GO_Central"/>
</dbReference>
<dbReference type="GO" id="GO:0038023">
    <property type="term" value="F:signaling receptor activity"/>
    <property type="evidence" value="ECO:0000318"/>
    <property type="project" value="GO_Central"/>
</dbReference>
<dbReference type="GO" id="GO:0009738">
    <property type="term" value="P:abscisic acid-activated signaling pathway"/>
    <property type="evidence" value="ECO:0000314"/>
    <property type="project" value="UniProtKB"/>
</dbReference>
<dbReference type="GO" id="GO:0009409">
    <property type="term" value="P:response to cold"/>
    <property type="evidence" value="ECO:0000315"/>
    <property type="project" value="UniProtKB"/>
</dbReference>
<dbReference type="GO" id="GO:0009414">
    <property type="term" value="P:response to water deprivation"/>
    <property type="evidence" value="ECO:0000315"/>
    <property type="project" value="UniProtKB"/>
</dbReference>
<dbReference type="GO" id="GO:0009845">
    <property type="term" value="P:seed germination"/>
    <property type="evidence" value="ECO:0000315"/>
    <property type="project" value="UniProtKB"/>
</dbReference>
<dbReference type="CDD" id="cd07821">
    <property type="entry name" value="PYR_PYL_RCAR_like"/>
    <property type="match status" value="1"/>
</dbReference>
<dbReference type="FunFam" id="3.30.530.20:FF:000019">
    <property type="entry name" value="Abscisic acid receptor PYR1"/>
    <property type="match status" value="1"/>
</dbReference>
<dbReference type="Gene3D" id="3.30.530.20">
    <property type="match status" value="1"/>
</dbReference>
<dbReference type="InterPro" id="IPR050279">
    <property type="entry name" value="Plant_def-hormone_signal"/>
</dbReference>
<dbReference type="InterPro" id="IPR019587">
    <property type="entry name" value="Polyketide_cyclase/dehydratase"/>
</dbReference>
<dbReference type="InterPro" id="IPR023393">
    <property type="entry name" value="START-like_dom_sf"/>
</dbReference>
<dbReference type="PANTHER" id="PTHR31213:SF103">
    <property type="entry name" value="ABSCISIC ACID RECEPTOR PYL9"/>
    <property type="match status" value="1"/>
</dbReference>
<dbReference type="PANTHER" id="PTHR31213">
    <property type="entry name" value="OS08G0374000 PROTEIN-RELATED"/>
    <property type="match status" value="1"/>
</dbReference>
<dbReference type="Pfam" id="PF10604">
    <property type="entry name" value="Polyketide_cyc2"/>
    <property type="match status" value="1"/>
</dbReference>
<dbReference type="SUPFAM" id="SSF55961">
    <property type="entry name" value="Bet v1-like"/>
    <property type="match status" value="1"/>
</dbReference>
<evidence type="ECO:0000250" key="1">
    <source>
        <dbReference type="UniProtKB" id="O49686"/>
    </source>
</evidence>
<evidence type="ECO:0000250" key="2">
    <source>
        <dbReference type="UniProtKB" id="Q8H1R0"/>
    </source>
</evidence>
<evidence type="ECO:0000250" key="3">
    <source>
        <dbReference type="UniProtKB" id="Q8VZS8"/>
    </source>
</evidence>
<evidence type="ECO:0000269" key="4">
    <source>
    </source>
</evidence>
<evidence type="ECO:0000269" key="5">
    <source>
    </source>
</evidence>
<evidence type="ECO:0000269" key="6">
    <source>
    </source>
</evidence>
<evidence type="ECO:0000303" key="7">
    <source>
    </source>
</evidence>
<evidence type="ECO:0000303" key="8">
    <source>
    </source>
</evidence>
<evidence type="ECO:0000305" key="9"/>
<evidence type="ECO:0000312" key="10">
    <source>
        <dbReference type="EMBL" id="BAD53743.1"/>
    </source>
</evidence>
<evidence type="ECO:0000312" key="11">
    <source>
        <dbReference type="EMBL" id="BAD53834.1"/>
    </source>
</evidence>
<evidence type="ECO:0000312" key="12">
    <source>
        <dbReference type="EMBL" id="BAF19788.1"/>
    </source>
</evidence>
<evidence type="ECO:0007744" key="13">
    <source>
        <dbReference type="PDB" id="4OIC"/>
    </source>
</evidence>
<evidence type="ECO:0007829" key="14">
    <source>
        <dbReference type="PDB" id="4OIC"/>
    </source>
</evidence>
<organism>
    <name type="scientific">Oryza sativa subsp. japonica</name>
    <name type="common">Rice</name>
    <dbReference type="NCBI Taxonomy" id="39947"/>
    <lineage>
        <taxon>Eukaryota</taxon>
        <taxon>Viridiplantae</taxon>
        <taxon>Streptophyta</taxon>
        <taxon>Embryophyta</taxon>
        <taxon>Tracheophyta</taxon>
        <taxon>Spermatophyta</taxon>
        <taxon>Magnoliopsida</taxon>
        <taxon>Liliopsida</taxon>
        <taxon>Poales</taxon>
        <taxon>Poaceae</taxon>
        <taxon>BOP clade</taxon>
        <taxon>Oryzoideae</taxon>
        <taxon>Oryzeae</taxon>
        <taxon>Oryzinae</taxon>
        <taxon>Oryza</taxon>
        <taxon>Oryza sativa</taxon>
    </lineage>
</organism>
<feature type="chain" id="PRO_0000444341" description="Abscisic acid receptor PYL9">
    <location>
        <begin position="1"/>
        <end position="207"/>
    </location>
</feature>
<feature type="region of interest" description="START-like" evidence="2">
    <location>
        <begin position="31"/>
        <end position="197"/>
    </location>
</feature>
<feature type="short sequence motif" description="Gate loop" evidence="3">
    <location>
        <begin position="100"/>
        <end position="104"/>
    </location>
</feature>
<feature type="short sequence motif" description="Latch loop" evidence="3">
    <location>
        <begin position="130"/>
        <end position="132"/>
    </location>
</feature>
<feature type="binding site" evidence="4 13">
    <location>
        <position position="74"/>
    </location>
    <ligand>
        <name>abscisate</name>
        <dbReference type="ChEBI" id="CHEBI:62432"/>
    </ligand>
</feature>
<feature type="binding site" evidence="1">
    <location>
        <begin position="104"/>
        <end position="109"/>
    </location>
    <ligand>
        <name>abscisate</name>
        <dbReference type="ChEBI" id="CHEBI:62432"/>
    </ligand>
</feature>
<feature type="binding site" evidence="1">
    <location>
        <begin position="131"/>
        <end position="137"/>
    </location>
    <ligand>
        <name>abscisate</name>
        <dbReference type="ChEBI" id="CHEBI:62432"/>
    </ligand>
</feature>
<feature type="binding site" evidence="1">
    <location>
        <position position="162"/>
    </location>
    <ligand>
        <name>abscisate</name>
        <dbReference type="ChEBI" id="CHEBI:62432"/>
    </ligand>
</feature>
<feature type="site" description="Involved in interactions with PP2Cs" evidence="1">
    <location>
        <position position="103"/>
    </location>
</feature>
<feature type="site" description="Involved in interactions with PP2Cs" evidence="1">
    <location>
        <position position="173"/>
    </location>
</feature>
<feature type="helix" evidence="14">
    <location>
        <begin position="5"/>
        <end position="11"/>
    </location>
</feature>
<feature type="helix" evidence="14">
    <location>
        <begin position="15"/>
        <end position="20"/>
    </location>
</feature>
<feature type="helix" evidence="14">
    <location>
        <begin position="22"/>
        <end position="28"/>
    </location>
</feature>
<feature type="strand" evidence="14">
    <location>
        <begin position="44"/>
        <end position="55"/>
    </location>
</feature>
<feature type="helix" evidence="14">
    <location>
        <begin position="57"/>
        <end position="65"/>
    </location>
</feature>
<feature type="helix" evidence="14">
    <location>
        <begin position="70"/>
        <end position="72"/>
    </location>
</feature>
<feature type="strand" evidence="14">
    <location>
        <begin position="77"/>
        <end position="85"/>
    </location>
</feature>
<feature type="strand" evidence="14">
    <location>
        <begin position="87"/>
        <end position="89"/>
    </location>
</feature>
<feature type="strand" evidence="14">
    <location>
        <begin position="93"/>
        <end position="98"/>
    </location>
</feature>
<feature type="strand" evidence="14">
    <location>
        <begin position="105"/>
        <end position="115"/>
    </location>
</feature>
<feature type="turn" evidence="14">
    <location>
        <begin position="116"/>
        <end position="119"/>
    </location>
</feature>
<feature type="strand" evidence="14">
    <location>
        <begin position="120"/>
        <end position="127"/>
    </location>
</feature>
<feature type="strand" evidence="14">
    <location>
        <begin position="129"/>
        <end position="131"/>
    </location>
</feature>
<feature type="strand" evidence="14">
    <location>
        <begin position="136"/>
        <end position="144"/>
    </location>
</feature>
<feature type="strand" evidence="14">
    <location>
        <begin position="157"/>
        <end position="167"/>
    </location>
</feature>
<feature type="helix" evidence="14">
    <location>
        <begin position="174"/>
        <end position="198"/>
    </location>
</feature>
<keyword id="KW-0002">3D-structure</keyword>
<keyword id="KW-0938">Abscisic acid signaling pathway</keyword>
<keyword id="KW-0963">Cytoplasm</keyword>
<keyword id="KW-0539">Nucleus</keyword>
<keyword id="KW-0650">Protein phosphatase inhibitor</keyword>
<keyword id="KW-0675">Receptor</keyword>
<keyword id="KW-1185">Reference proteome</keyword>
<keyword id="KW-0346">Stress response</keyword>
<reference key="1">
    <citation type="journal article" date="2005" name="Nature">
        <title>The map-based sequence of the rice genome.</title>
        <authorList>
            <consortium name="International rice genome sequencing project (IRGSP)"/>
        </authorList>
    </citation>
    <scope>NUCLEOTIDE SEQUENCE [LARGE SCALE GENOMIC DNA]</scope>
    <source>
        <strain>cv. Nipponbare</strain>
    </source>
</reference>
<reference key="2">
    <citation type="journal article" date="2008" name="Nucleic Acids Res.">
        <title>The rice annotation project database (RAP-DB): 2008 update.</title>
        <authorList>
            <consortium name="The rice annotation project (RAP)"/>
        </authorList>
    </citation>
    <scope>GENOME REANNOTATION</scope>
    <source>
        <strain>cv. Nipponbare</strain>
    </source>
</reference>
<reference key="3">
    <citation type="journal article" date="2013" name="Rice">
        <title>Improvement of the Oryza sativa Nipponbare reference genome using next generation sequence and optical map data.</title>
        <authorList>
            <person name="Kawahara Y."/>
            <person name="de la Bastide M."/>
            <person name="Hamilton J.P."/>
            <person name="Kanamori H."/>
            <person name="McCombie W.R."/>
            <person name="Ouyang S."/>
            <person name="Schwartz D.C."/>
            <person name="Tanaka T."/>
            <person name="Wu J."/>
            <person name="Zhou S."/>
            <person name="Childs K.L."/>
            <person name="Davidson R.M."/>
            <person name="Lin H."/>
            <person name="Quesada-Ocampo L."/>
            <person name="Vaillancourt B."/>
            <person name="Sakai H."/>
            <person name="Lee S.S."/>
            <person name="Kim J."/>
            <person name="Numa H."/>
            <person name="Itoh T."/>
            <person name="Buell C.R."/>
            <person name="Matsumoto T."/>
        </authorList>
    </citation>
    <scope>GENOME REANNOTATION</scope>
    <source>
        <strain>cv. Nipponbare</strain>
    </source>
</reference>
<reference key="4">
    <citation type="journal article" date="2015" name="Rice">
        <title>Characterization and functional analysis of pyrabactin resistance-like abscisic acid receptor family in rice.</title>
        <authorList>
            <person name="Tian X."/>
            <person name="Wang Z."/>
            <person name="Li X."/>
            <person name="Lv T."/>
            <person name="Liu H."/>
            <person name="Wang L."/>
            <person name="Niu H."/>
            <person name="Bu Q."/>
        </authorList>
    </citation>
    <scope>FUNCTION</scope>
    <scope>INTERACTION WITH PP2C30 AND PP2C53</scope>
    <scope>SUBCELLULAR LOCATION</scope>
    <scope>INDUCTION</scope>
</reference>
<reference key="5">
    <citation type="journal article" date="2017" name="Mol. Plant">
        <title>Modulation of ABA signaling by altering VxGL motif of PP2Cs in Oryza sativa.</title>
        <authorList>
            <person name="Han S."/>
            <person name="Min M.K."/>
            <person name="Lee S.Y."/>
            <person name="Lim C.W."/>
            <person name="Bhatnagar N."/>
            <person name="Lee Y."/>
            <person name="Shin D."/>
            <person name="Chung K.Y."/>
            <person name="Lee S.C."/>
            <person name="Kim B.G."/>
            <person name="Lee S."/>
        </authorList>
    </citation>
    <scope>INTERACTION WITH PP2C50</scope>
</reference>
<reference key="6">
    <citation type="journal article" date="2014" name="PLoS ONE">
        <title>Identification and characterization of ABA receptors in Oryza sativa.</title>
        <authorList>
            <person name="He Y."/>
            <person name="Hao Q."/>
            <person name="Li W."/>
            <person name="Yan C."/>
            <person name="Yan N."/>
            <person name="Yin P."/>
        </authorList>
    </citation>
    <scope>X-RAY CRYSTALLOGRAPHY (2.00 ANGSTROMS) IN COMPLEX WITH ABSCISIC ACID</scope>
    <scope>FUNCTION</scope>
    <scope>INTERACTION WITH PP2C06</scope>
    <scope>HOMODIMERIZATION</scope>
</reference>